<accession>O49550</accession>
<accession>C0SVI7</accession>
<comment type="function">
    <text evidence="1">Transcription factor that binds specifically to a 5'-AA[AG]G-3' consensus core sequence.</text>
</comment>
<comment type="subcellular location">
    <subcellularLocation>
        <location evidence="3">Nucleus</location>
    </subcellularLocation>
</comment>
<proteinExistence type="inferred from homology"/>
<gene>
    <name type="primary">DOF4.5</name>
    <name type="ordered locus">At4g21080</name>
    <name type="ORF">F7J7.20</name>
</gene>
<name>DOF45_ARATH</name>
<organism>
    <name type="scientific">Arabidopsis thaliana</name>
    <name type="common">Mouse-ear cress</name>
    <dbReference type="NCBI Taxonomy" id="3702"/>
    <lineage>
        <taxon>Eukaryota</taxon>
        <taxon>Viridiplantae</taxon>
        <taxon>Streptophyta</taxon>
        <taxon>Embryophyta</taxon>
        <taxon>Tracheophyta</taxon>
        <taxon>Spermatophyta</taxon>
        <taxon>Magnoliopsida</taxon>
        <taxon>eudicotyledons</taxon>
        <taxon>Gunneridae</taxon>
        <taxon>Pentapetalae</taxon>
        <taxon>rosids</taxon>
        <taxon>malvids</taxon>
        <taxon>Brassicales</taxon>
        <taxon>Brassicaceae</taxon>
        <taxon>Camelineae</taxon>
        <taxon>Arabidopsis</taxon>
    </lineage>
</organism>
<protein>
    <recommendedName>
        <fullName>Dof zinc finger protein DOF4.5</fullName>
        <shortName>AtDOF4.5</shortName>
    </recommendedName>
</protein>
<reference key="1">
    <citation type="journal article" date="1999" name="Nature">
        <title>Sequence and analysis of chromosome 4 of the plant Arabidopsis thaliana.</title>
        <authorList>
            <person name="Mayer K.F.X."/>
            <person name="Schueller C."/>
            <person name="Wambutt R."/>
            <person name="Murphy G."/>
            <person name="Volckaert G."/>
            <person name="Pohl T."/>
            <person name="Duesterhoeft A."/>
            <person name="Stiekema W."/>
            <person name="Entian K.-D."/>
            <person name="Terryn N."/>
            <person name="Harris B."/>
            <person name="Ansorge W."/>
            <person name="Brandt P."/>
            <person name="Grivell L.A."/>
            <person name="Rieger M."/>
            <person name="Weichselgartner M."/>
            <person name="de Simone V."/>
            <person name="Obermaier B."/>
            <person name="Mache R."/>
            <person name="Mueller M."/>
            <person name="Kreis M."/>
            <person name="Delseny M."/>
            <person name="Puigdomenech P."/>
            <person name="Watson M."/>
            <person name="Schmidtheini T."/>
            <person name="Reichert B."/>
            <person name="Portetelle D."/>
            <person name="Perez-Alonso M."/>
            <person name="Boutry M."/>
            <person name="Bancroft I."/>
            <person name="Vos P."/>
            <person name="Hoheisel J."/>
            <person name="Zimmermann W."/>
            <person name="Wedler H."/>
            <person name="Ridley P."/>
            <person name="Langham S.-A."/>
            <person name="McCullagh B."/>
            <person name="Bilham L."/>
            <person name="Robben J."/>
            <person name="van der Schueren J."/>
            <person name="Grymonprez B."/>
            <person name="Chuang Y.-J."/>
            <person name="Vandenbussche F."/>
            <person name="Braeken M."/>
            <person name="Weltjens I."/>
            <person name="Voet M."/>
            <person name="Bastiaens I."/>
            <person name="Aert R."/>
            <person name="Defoor E."/>
            <person name="Weitzenegger T."/>
            <person name="Bothe G."/>
            <person name="Ramsperger U."/>
            <person name="Hilbert H."/>
            <person name="Braun M."/>
            <person name="Holzer E."/>
            <person name="Brandt A."/>
            <person name="Peters S."/>
            <person name="van Staveren M."/>
            <person name="Dirkse W."/>
            <person name="Mooijman P."/>
            <person name="Klein Lankhorst R."/>
            <person name="Rose M."/>
            <person name="Hauf J."/>
            <person name="Koetter P."/>
            <person name="Berneiser S."/>
            <person name="Hempel S."/>
            <person name="Feldpausch M."/>
            <person name="Lamberth S."/>
            <person name="Van den Daele H."/>
            <person name="De Keyser A."/>
            <person name="Buysshaert C."/>
            <person name="Gielen J."/>
            <person name="Villarroel R."/>
            <person name="De Clercq R."/>
            <person name="van Montagu M."/>
            <person name="Rogers J."/>
            <person name="Cronin A."/>
            <person name="Quail M.A."/>
            <person name="Bray-Allen S."/>
            <person name="Clark L."/>
            <person name="Doggett J."/>
            <person name="Hall S."/>
            <person name="Kay M."/>
            <person name="Lennard N."/>
            <person name="McLay K."/>
            <person name="Mayes R."/>
            <person name="Pettett A."/>
            <person name="Rajandream M.A."/>
            <person name="Lyne M."/>
            <person name="Benes V."/>
            <person name="Rechmann S."/>
            <person name="Borkova D."/>
            <person name="Bloecker H."/>
            <person name="Scharfe M."/>
            <person name="Grimm M."/>
            <person name="Loehnert T.-H."/>
            <person name="Dose S."/>
            <person name="de Haan M."/>
            <person name="Maarse A.C."/>
            <person name="Schaefer M."/>
            <person name="Mueller-Auer S."/>
            <person name="Gabel C."/>
            <person name="Fuchs M."/>
            <person name="Fartmann B."/>
            <person name="Granderath K."/>
            <person name="Dauner D."/>
            <person name="Herzl A."/>
            <person name="Neumann S."/>
            <person name="Argiriou A."/>
            <person name="Vitale D."/>
            <person name="Liguori R."/>
            <person name="Piravandi E."/>
            <person name="Massenet O."/>
            <person name="Quigley F."/>
            <person name="Clabauld G."/>
            <person name="Muendlein A."/>
            <person name="Felber R."/>
            <person name="Schnabl S."/>
            <person name="Hiller R."/>
            <person name="Schmidt W."/>
            <person name="Lecharny A."/>
            <person name="Aubourg S."/>
            <person name="Chefdor F."/>
            <person name="Cooke R."/>
            <person name="Berger C."/>
            <person name="Monfort A."/>
            <person name="Casacuberta E."/>
            <person name="Gibbons T."/>
            <person name="Weber N."/>
            <person name="Vandenbol M."/>
            <person name="Bargues M."/>
            <person name="Terol J."/>
            <person name="Torres A."/>
            <person name="Perez-Perez A."/>
            <person name="Purnelle B."/>
            <person name="Bent E."/>
            <person name="Johnson S."/>
            <person name="Tacon D."/>
            <person name="Jesse T."/>
            <person name="Heijnen L."/>
            <person name="Schwarz S."/>
            <person name="Scholler P."/>
            <person name="Heber S."/>
            <person name="Francs P."/>
            <person name="Bielke C."/>
            <person name="Frishman D."/>
            <person name="Haase D."/>
            <person name="Lemcke K."/>
            <person name="Mewes H.-W."/>
            <person name="Stocker S."/>
            <person name="Zaccaria P."/>
            <person name="Bevan M."/>
            <person name="Wilson R.K."/>
            <person name="de la Bastide M."/>
            <person name="Habermann K."/>
            <person name="Parnell L."/>
            <person name="Dedhia N."/>
            <person name="Gnoj L."/>
            <person name="Schutz K."/>
            <person name="Huang E."/>
            <person name="Spiegel L."/>
            <person name="Sekhon M."/>
            <person name="Murray J."/>
            <person name="Sheet P."/>
            <person name="Cordes M."/>
            <person name="Abu-Threideh J."/>
            <person name="Stoneking T."/>
            <person name="Kalicki J."/>
            <person name="Graves T."/>
            <person name="Harmon G."/>
            <person name="Edwards J."/>
            <person name="Latreille P."/>
            <person name="Courtney L."/>
            <person name="Cloud J."/>
            <person name="Abbott A."/>
            <person name="Scott K."/>
            <person name="Johnson D."/>
            <person name="Minx P."/>
            <person name="Bentley D."/>
            <person name="Fulton B."/>
            <person name="Miller N."/>
            <person name="Greco T."/>
            <person name="Kemp K."/>
            <person name="Kramer J."/>
            <person name="Fulton L."/>
            <person name="Mardis E."/>
            <person name="Dante M."/>
            <person name="Pepin K."/>
            <person name="Hillier L.W."/>
            <person name="Nelson J."/>
            <person name="Spieth J."/>
            <person name="Ryan E."/>
            <person name="Andrews S."/>
            <person name="Geisel C."/>
            <person name="Layman D."/>
            <person name="Du H."/>
            <person name="Ali J."/>
            <person name="Berghoff A."/>
            <person name="Jones K."/>
            <person name="Drone K."/>
            <person name="Cotton M."/>
            <person name="Joshu C."/>
            <person name="Antonoiu B."/>
            <person name="Zidanic M."/>
            <person name="Strong C."/>
            <person name="Sun H."/>
            <person name="Lamar B."/>
            <person name="Yordan C."/>
            <person name="Ma P."/>
            <person name="Zhong J."/>
            <person name="Preston R."/>
            <person name="Vil D."/>
            <person name="Shekher M."/>
            <person name="Matero A."/>
            <person name="Shah R."/>
            <person name="Swaby I.K."/>
            <person name="O'Shaughnessy A."/>
            <person name="Rodriguez M."/>
            <person name="Hoffman J."/>
            <person name="Till S."/>
            <person name="Granat S."/>
            <person name="Shohdy N."/>
            <person name="Hasegawa A."/>
            <person name="Hameed A."/>
            <person name="Lodhi M."/>
            <person name="Johnson A."/>
            <person name="Chen E."/>
            <person name="Marra M.A."/>
            <person name="Martienssen R."/>
            <person name="McCombie W.R."/>
        </authorList>
    </citation>
    <scope>NUCLEOTIDE SEQUENCE [LARGE SCALE GENOMIC DNA]</scope>
    <source>
        <strain>cv. Columbia</strain>
    </source>
</reference>
<reference key="2">
    <citation type="journal article" date="2017" name="Plant J.">
        <title>Araport11: a complete reannotation of the Arabidopsis thaliana reference genome.</title>
        <authorList>
            <person name="Cheng C.Y."/>
            <person name="Krishnakumar V."/>
            <person name="Chan A.P."/>
            <person name="Thibaud-Nissen F."/>
            <person name="Schobel S."/>
            <person name="Town C.D."/>
        </authorList>
    </citation>
    <scope>GENOME REANNOTATION</scope>
    <source>
        <strain>cv. Columbia</strain>
    </source>
</reference>
<reference key="3">
    <citation type="submission" date="2009-03" db="EMBL/GenBank/DDBJ databases">
        <title>ORF cloning and analysis of Arabidopsis transcription factor genes.</title>
        <authorList>
            <person name="Fujita M."/>
            <person name="Mizukado S."/>
            <person name="Seki M."/>
            <person name="Shinozaki K."/>
            <person name="Mitsuda N."/>
            <person name="Takiguchi Y."/>
            <person name="Takagi M."/>
        </authorList>
    </citation>
    <scope>NUCLEOTIDE SEQUENCE [LARGE SCALE GENOMIC DNA]</scope>
</reference>
<reference key="4">
    <citation type="journal article" date="2002" name="Trends Plant Sci.">
        <title>The Dof family of plant transcription factors.</title>
        <authorList>
            <person name="Yanagisawa S."/>
        </authorList>
    </citation>
    <scope>GENE FAMILY</scope>
    <scope>NOMENCLATURE</scope>
</reference>
<evidence type="ECO:0000250" key="1"/>
<evidence type="ECO:0000255" key="2">
    <source>
        <dbReference type="PROSITE-ProRule" id="PRU00071"/>
    </source>
</evidence>
<evidence type="ECO:0000305" key="3"/>
<feature type="chain" id="PRO_0000074288" description="Dof zinc finger protein DOF4.5">
    <location>
        <begin position="1"/>
        <end position="249"/>
    </location>
</feature>
<feature type="zinc finger region" description="Dof-type" evidence="2">
    <location>
        <begin position="25"/>
        <end position="79"/>
    </location>
</feature>
<feature type="binding site" evidence="2">
    <location>
        <position position="27"/>
    </location>
    <ligand>
        <name>Zn(2+)</name>
        <dbReference type="ChEBI" id="CHEBI:29105"/>
    </ligand>
</feature>
<feature type="binding site" evidence="2">
    <location>
        <position position="30"/>
    </location>
    <ligand>
        <name>Zn(2+)</name>
        <dbReference type="ChEBI" id="CHEBI:29105"/>
    </ligand>
</feature>
<feature type="binding site" evidence="2">
    <location>
        <position position="52"/>
    </location>
    <ligand>
        <name>Zn(2+)</name>
        <dbReference type="ChEBI" id="CHEBI:29105"/>
    </ligand>
</feature>
<feature type="binding site" evidence="2">
    <location>
        <position position="55"/>
    </location>
    <ligand>
        <name>Zn(2+)</name>
        <dbReference type="ChEBI" id="CHEBI:29105"/>
    </ligand>
</feature>
<dbReference type="EMBL" id="AL021960">
    <property type="protein sequence ID" value="CAA17527.1"/>
    <property type="molecule type" value="Genomic_DNA"/>
</dbReference>
<dbReference type="EMBL" id="AL161554">
    <property type="protein sequence ID" value="CAB79108.1"/>
    <property type="molecule type" value="Genomic_DNA"/>
</dbReference>
<dbReference type="EMBL" id="CP002687">
    <property type="protein sequence ID" value="AEE84397.1"/>
    <property type="molecule type" value="Genomic_DNA"/>
</dbReference>
<dbReference type="EMBL" id="AB493690">
    <property type="protein sequence ID" value="BAH30528.1"/>
    <property type="molecule type" value="Genomic_DNA"/>
</dbReference>
<dbReference type="PIR" id="T04939">
    <property type="entry name" value="T04939"/>
</dbReference>
<dbReference type="RefSeq" id="NP_193840.1">
    <property type="nucleotide sequence ID" value="NM_118226.1"/>
</dbReference>
<dbReference type="BioGRID" id="13146">
    <property type="interactions" value="2"/>
</dbReference>
<dbReference type="FunCoup" id="O49550">
    <property type="interactions" value="3"/>
</dbReference>
<dbReference type="IntAct" id="O49550">
    <property type="interactions" value="2"/>
</dbReference>
<dbReference type="STRING" id="3702.O49550"/>
<dbReference type="PaxDb" id="3702-AT4G21080.1"/>
<dbReference type="DNASU" id="827855"/>
<dbReference type="EnsemblPlants" id="AT4G21080.1">
    <property type="protein sequence ID" value="AT4G21080.1"/>
    <property type="gene ID" value="AT4G21080"/>
</dbReference>
<dbReference type="GeneID" id="827855"/>
<dbReference type="Gramene" id="AT4G21080.1">
    <property type="protein sequence ID" value="AT4G21080.1"/>
    <property type="gene ID" value="AT4G21080"/>
</dbReference>
<dbReference type="KEGG" id="ath:AT4G21080"/>
<dbReference type="Araport" id="AT4G21080"/>
<dbReference type="TAIR" id="AT4G21080">
    <property type="gene designation" value="DOF4.5"/>
</dbReference>
<dbReference type="HOGENOM" id="CLU_108202_0_0_1"/>
<dbReference type="InParanoid" id="O49550"/>
<dbReference type="OMA" id="IQTIPPM"/>
<dbReference type="PhylomeDB" id="O49550"/>
<dbReference type="PRO" id="PR:O49550"/>
<dbReference type="Proteomes" id="UP000006548">
    <property type="component" value="Chromosome 4"/>
</dbReference>
<dbReference type="ExpressionAtlas" id="O49550">
    <property type="expression patterns" value="baseline and differential"/>
</dbReference>
<dbReference type="GO" id="GO:0005634">
    <property type="term" value="C:nucleus"/>
    <property type="evidence" value="ECO:0007669"/>
    <property type="project" value="UniProtKB-SubCell"/>
</dbReference>
<dbReference type="GO" id="GO:0003677">
    <property type="term" value="F:DNA binding"/>
    <property type="evidence" value="ECO:0007669"/>
    <property type="project" value="UniProtKB-KW"/>
</dbReference>
<dbReference type="GO" id="GO:0003700">
    <property type="term" value="F:DNA-binding transcription factor activity"/>
    <property type="evidence" value="ECO:0000250"/>
    <property type="project" value="TAIR"/>
</dbReference>
<dbReference type="GO" id="GO:0008270">
    <property type="term" value="F:zinc ion binding"/>
    <property type="evidence" value="ECO:0007669"/>
    <property type="project" value="UniProtKB-KW"/>
</dbReference>
<dbReference type="GO" id="GO:0006355">
    <property type="term" value="P:regulation of DNA-templated transcription"/>
    <property type="evidence" value="ECO:0000304"/>
    <property type="project" value="TAIR"/>
</dbReference>
<dbReference type="InterPro" id="IPR045174">
    <property type="entry name" value="Dof"/>
</dbReference>
<dbReference type="InterPro" id="IPR003851">
    <property type="entry name" value="Znf_Dof"/>
</dbReference>
<dbReference type="PANTHER" id="PTHR31992">
    <property type="entry name" value="DOF ZINC FINGER PROTEIN DOF1.4-RELATED"/>
    <property type="match status" value="1"/>
</dbReference>
<dbReference type="PANTHER" id="PTHR31992:SF126">
    <property type="entry name" value="DOF ZINC FINGER PROTEIN DOF4.2-RELATED"/>
    <property type="match status" value="1"/>
</dbReference>
<dbReference type="Pfam" id="PF02701">
    <property type="entry name" value="Zn_ribbon_Dof"/>
    <property type="match status" value="1"/>
</dbReference>
<dbReference type="PROSITE" id="PS01361">
    <property type="entry name" value="ZF_DOF_1"/>
    <property type="match status" value="1"/>
</dbReference>
<dbReference type="PROSITE" id="PS50884">
    <property type="entry name" value="ZF_DOF_2"/>
    <property type="match status" value="1"/>
</dbReference>
<keyword id="KW-0238">DNA-binding</keyword>
<keyword id="KW-0479">Metal-binding</keyword>
<keyword id="KW-0539">Nucleus</keyword>
<keyword id="KW-1185">Reference proteome</keyword>
<keyword id="KW-0804">Transcription</keyword>
<keyword id="KW-0805">Transcription regulation</keyword>
<keyword id="KW-0862">Zinc</keyword>
<keyword id="KW-0863">Zinc-finger</keyword>
<sequence>MDNLNVFANEDNQVNDVKPPPPPPRVCARCDSDNTKFCYYNNYCEFQPRYFCKNCRRYWTHGGALRNIPIGGSSRAKRARVNQPSVARMVSVETQRGNNQPFSNVQENVHLVGSFGASSSSSVGAVGNLFGSLYDIHGGMVTNLHPTRTVRPNHRLAFHDGSFEQDYYDVGSDNLLVNQQVGGYGYHMNPVDQFKWNQSFNNTMNMNYNNDSTSGSSRGSDMNVNHDNKKIRYRNSVIMHPCHLEKDGP</sequence>